<name>CRBB3_HUMAN</name>
<comment type="function">
    <text>Crystallins are the dominant structural components of the vertebrate eye lens.</text>
</comment>
<comment type="subunit">
    <text evidence="1">Homo/heterodimer, or complexes of higher-order. The structure of beta-crystallin oligomers seems to be stabilized through interactions between the N-terminal arms (By similarity).</text>
</comment>
<comment type="interaction">
    <interactant intactId="EBI-1965681">
        <id>P26998</id>
    </interactant>
    <interactant intactId="EBI-718729">
        <id>P55212</id>
        <label>CASP6</label>
    </interactant>
    <organismsDiffer>false</organismsDiffer>
    <experiments>3</experiments>
</comment>
<comment type="interaction">
    <interactant intactId="EBI-1965681">
        <id>P26998</id>
    </interactant>
    <interactant intactId="EBI-6875961">
        <id>P02489</id>
        <label>CRYAA</label>
    </interactant>
    <organismsDiffer>false</organismsDiffer>
    <experiments>3</experiments>
</comment>
<comment type="interaction">
    <interactant intactId="EBI-1965681">
        <id>P26998</id>
    </interactant>
    <interactant intactId="EBI-7043337">
        <id>P05813</id>
        <label>CRYBA1</label>
    </interactant>
    <organismsDiffer>false</organismsDiffer>
    <experiments>6</experiments>
</comment>
<comment type="interaction">
    <interactant intactId="EBI-1965681">
        <id>P26998</id>
    </interactant>
    <interactant intactId="EBI-2880244">
        <id>Q6PKX4</id>
        <label>DOK6</label>
    </interactant>
    <organismsDiffer>false</organismsDiffer>
    <experiments>3</experiments>
</comment>
<comment type="interaction">
    <interactant intactId="EBI-1965681">
        <id>P26998</id>
    </interactant>
    <interactant intactId="EBI-356015">
        <id>Q14204</id>
        <label>DYNC1H1</label>
    </interactant>
    <organismsDiffer>false</organismsDiffer>
    <experiments>3</experiments>
</comment>
<comment type="interaction">
    <interactant intactId="EBI-1965681">
        <id>P26998</id>
    </interactant>
    <interactant intactId="EBI-21591415">
        <id>P13473-2</id>
        <label>LAMP2</label>
    </interactant>
    <organismsDiffer>false</organismsDiffer>
    <experiments>3</experiments>
</comment>
<comment type="interaction">
    <interactant intactId="EBI-1965681">
        <id>P26998</id>
    </interactant>
    <interactant intactId="EBI-21493388">
        <id>Q3KP22</id>
        <label>MAJIN</label>
    </interactant>
    <organismsDiffer>false</organismsDiffer>
    <experiments>2</experiments>
</comment>
<comment type="interaction">
    <interactant intactId="EBI-1965681">
        <id>P26998</id>
    </interactant>
    <interactant intactId="EBI-5280197">
        <id>O75400-2</id>
        <label>PRPF40A</label>
    </interactant>
    <organismsDiffer>false</organismsDiffer>
    <experiments>3</experiments>
</comment>
<comment type="domain">
    <text>Has a two-domain beta-structure, folded into four very similar Greek key motifs.</text>
</comment>
<comment type="mass spectrometry">
    <molecule>Beta-crystallin B3</molecule>
</comment>
<comment type="disease" evidence="6 7 8">
    <disease id="DI-01233">
        <name>Cataract 22, multiple types</name>
        <acronym>CTRCT22</acronym>
        <description>An opacification of the crystalline lens of the eye that frequently results in visual impairment or blindness. Opacities vary in morphology, are often confined to a portion of the lens, and may be static or progressive. In general, the more posteriorly located and dense an opacity, the greater the impact on visual function. CTRCT22 includes nuclear cataract among others. Nuclear cataracts affect the central nucleus of the eye, and are often not highly visually significant. The density of the opacities varies greatly from fine dots to a dense, white and chalk-like, central cataract. The condition is usually bilateral. Nuclear cataracts are often combined with opacified cortical fibers encircling the nuclear opacity, which are referred to as cortical riders.</description>
        <dbReference type="MIM" id="609741"/>
    </disease>
    <text>The disease is caused by variants affecting the gene represented in this entry.</text>
</comment>
<comment type="similarity">
    <text evidence="11">Belongs to the beta/gamma-crystallin family.</text>
</comment>
<keyword id="KW-0002">3D-structure</keyword>
<keyword id="KW-0007">Acetylation</keyword>
<keyword id="KW-0898">Cataract</keyword>
<keyword id="KW-0225">Disease variant</keyword>
<keyword id="KW-0273">Eye lens protein</keyword>
<keyword id="KW-1267">Proteomics identification</keyword>
<keyword id="KW-1185">Reference proteome</keyword>
<keyword id="KW-0677">Repeat</keyword>
<accession>P26998</accession>
<accession>Q3B7S9</accession>
<accession>Q3T1B7</accession>
<accession>Q6ISK6</accession>
<accession>Q92965</accession>
<accession>Q9UH09</accession>
<gene>
    <name type="primary">CRYBB3</name>
    <name type="synonym">CRYB3</name>
</gene>
<proteinExistence type="evidence at protein level"/>
<sequence>MAEQHGAPEQAAAGKSHGDLGGSYKVILYELENFQGKRCELSAECPSLTDSLLEKVGSIQVESGPWLAFESRAFRGEQFVLEKGDYPRWDAWSNSRDSDSLLSLRPLNIDSPHHKLHLFENPAFSGRKMEIVDDDVPSLWAHGFQDRVASVRAINGTWVGYEFPGYRGRQYVFERGEYRHWNEWDASQPQLQSVRRIRDQKWHKRGRFPSS</sequence>
<protein>
    <recommendedName>
        <fullName>Beta-crystallin B3</fullName>
    </recommendedName>
    <alternativeName>
        <fullName>Beta-B3 crystallin</fullName>
    </alternativeName>
    <component>
        <recommendedName>
            <fullName>Beta-crystallin B3, N-terminally processed</fullName>
        </recommendedName>
    </component>
</protein>
<organism>
    <name type="scientific">Homo sapiens</name>
    <name type="common">Human</name>
    <dbReference type="NCBI Taxonomy" id="9606"/>
    <lineage>
        <taxon>Eukaryota</taxon>
        <taxon>Metazoa</taxon>
        <taxon>Chordata</taxon>
        <taxon>Craniata</taxon>
        <taxon>Vertebrata</taxon>
        <taxon>Euteleostomi</taxon>
        <taxon>Mammalia</taxon>
        <taxon>Eutheria</taxon>
        <taxon>Euarchontoglires</taxon>
        <taxon>Primates</taxon>
        <taxon>Haplorrhini</taxon>
        <taxon>Catarrhini</taxon>
        <taxon>Hominidae</taxon>
        <taxon>Homo</taxon>
    </lineage>
</organism>
<reference key="1">
    <citation type="journal article" date="2004" name="Genome Biol.">
        <title>A genome annotation-driven approach to cloning the human ORFeome.</title>
        <authorList>
            <person name="Collins J.E."/>
            <person name="Wright C.L."/>
            <person name="Edwards C.A."/>
            <person name="Davis M.P."/>
            <person name="Grinham J.A."/>
            <person name="Cole C.G."/>
            <person name="Goward M.E."/>
            <person name="Aguado B."/>
            <person name="Mallya M."/>
            <person name="Mokrab Y."/>
            <person name="Huckle E.J."/>
            <person name="Beare D.M."/>
            <person name="Dunham I."/>
        </authorList>
    </citation>
    <scope>NUCLEOTIDE SEQUENCE [LARGE SCALE MRNA]</scope>
    <scope>VARIANT ASP-113</scope>
</reference>
<reference key="2">
    <citation type="journal article" date="1999" name="Nature">
        <title>The DNA sequence of human chromosome 22.</title>
        <authorList>
            <person name="Dunham I."/>
            <person name="Hunt A.R."/>
            <person name="Collins J.E."/>
            <person name="Bruskiewich R."/>
            <person name="Beare D.M."/>
            <person name="Clamp M."/>
            <person name="Smink L.J."/>
            <person name="Ainscough R."/>
            <person name="Almeida J.P."/>
            <person name="Babbage A.K."/>
            <person name="Bagguley C."/>
            <person name="Bailey J."/>
            <person name="Barlow K.F."/>
            <person name="Bates K.N."/>
            <person name="Beasley O.P."/>
            <person name="Bird C.P."/>
            <person name="Blakey S.E."/>
            <person name="Bridgeman A.M."/>
            <person name="Buck D."/>
            <person name="Burgess J."/>
            <person name="Burrill W.D."/>
            <person name="Burton J."/>
            <person name="Carder C."/>
            <person name="Carter N.P."/>
            <person name="Chen Y."/>
            <person name="Clark G."/>
            <person name="Clegg S.M."/>
            <person name="Cobley V.E."/>
            <person name="Cole C.G."/>
            <person name="Collier R.E."/>
            <person name="Connor R."/>
            <person name="Conroy D."/>
            <person name="Corby N.R."/>
            <person name="Coville G.J."/>
            <person name="Cox A.V."/>
            <person name="Davis J."/>
            <person name="Dawson E."/>
            <person name="Dhami P.D."/>
            <person name="Dockree C."/>
            <person name="Dodsworth S.J."/>
            <person name="Durbin R.M."/>
            <person name="Ellington A.G."/>
            <person name="Evans K.L."/>
            <person name="Fey J.M."/>
            <person name="Fleming K."/>
            <person name="French L."/>
            <person name="Garner A.A."/>
            <person name="Gilbert J.G.R."/>
            <person name="Goward M.E."/>
            <person name="Grafham D.V."/>
            <person name="Griffiths M.N.D."/>
            <person name="Hall C."/>
            <person name="Hall R.E."/>
            <person name="Hall-Tamlyn G."/>
            <person name="Heathcott R.W."/>
            <person name="Ho S."/>
            <person name="Holmes S."/>
            <person name="Hunt S.E."/>
            <person name="Jones M.C."/>
            <person name="Kershaw J."/>
            <person name="Kimberley A.M."/>
            <person name="King A."/>
            <person name="Laird G.K."/>
            <person name="Langford C.F."/>
            <person name="Leversha M.A."/>
            <person name="Lloyd C."/>
            <person name="Lloyd D.M."/>
            <person name="Martyn I.D."/>
            <person name="Mashreghi-Mohammadi M."/>
            <person name="Matthews L.H."/>
            <person name="Mccann O.T."/>
            <person name="Mcclay J."/>
            <person name="Mclaren S."/>
            <person name="McMurray A.A."/>
            <person name="Milne S.A."/>
            <person name="Mortimore B.J."/>
            <person name="Odell C.N."/>
            <person name="Pavitt R."/>
            <person name="Pearce A.V."/>
            <person name="Pearson D."/>
            <person name="Phillimore B.J.C.T."/>
            <person name="Phillips S.H."/>
            <person name="Plumb R.W."/>
            <person name="Ramsay H."/>
            <person name="Ramsey Y."/>
            <person name="Rogers L."/>
            <person name="Ross M.T."/>
            <person name="Scott C.E."/>
            <person name="Sehra H.K."/>
            <person name="Skuce C.D."/>
            <person name="Smalley S."/>
            <person name="Smith M.L."/>
            <person name="Soderlund C."/>
            <person name="Spragon L."/>
            <person name="Steward C.A."/>
            <person name="Sulston J.E."/>
            <person name="Swann R.M."/>
            <person name="Vaudin M."/>
            <person name="Wall M."/>
            <person name="Wallis J.M."/>
            <person name="Whiteley M.N."/>
            <person name="Willey D.L."/>
            <person name="Williams L."/>
            <person name="Williams S.A."/>
            <person name="Williamson H."/>
            <person name="Wilmer T.E."/>
            <person name="Wilming L."/>
            <person name="Wright C.L."/>
            <person name="Hubbard T."/>
            <person name="Bentley D.R."/>
            <person name="Beck S."/>
            <person name="Rogers J."/>
            <person name="Shimizu N."/>
            <person name="Minoshima S."/>
            <person name="Kawasaki K."/>
            <person name="Sasaki T."/>
            <person name="Asakawa S."/>
            <person name="Kudoh J."/>
            <person name="Shintani A."/>
            <person name="Shibuya K."/>
            <person name="Yoshizaki Y."/>
            <person name="Aoki N."/>
            <person name="Mitsuyama S."/>
            <person name="Roe B.A."/>
            <person name="Chen F."/>
            <person name="Chu L."/>
            <person name="Crabtree J."/>
            <person name="Deschamps S."/>
            <person name="Do A."/>
            <person name="Do T."/>
            <person name="Dorman A."/>
            <person name="Fang F."/>
            <person name="Fu Y."/>
            <person name="Hu P."/>
            <person name="Hua A."/>
            <person name="Kenton S."/>
            <person name="Lai H."/>
            <person name="Lao H.I."/>
            <person name="Lewis J."/>
            <person name="Lewis S."/>
            <person name="Lin S.-P."/>
            <person name="Loh P."/>
            <person name="Malaj E."/>
            <person name="Nguyen T."/>
            <person name="Pan H."/>
            <person name="Phan S."/>
            <person name="Qi S."/>
            <person name="Qian Y."/>
            <person name="Ray L."/>
            <person name="Ren Q."/>
            <person name="Shaull S."/>
            <person name="Sloan D."/>
            <person name="Song L."/>
            <person name="Wang Q."/>
            <person name="Wang Y."/>
            <person name="Wang Z."/>
            <person name="White J."/>
            <person name="Willingham D."/>
            <person name="Wu H."/>
            <person name="Yao Z."/>
            <person name="Zhan M."/>
            <person name="Zhang G."/>
            <person name="Chissoe S."/>
            <person name="Murray J."/>
            <person name="Miller N."/>
            <person name="Minx P."/>
            <person name="Fulton R."/>
            <person name="Johnson D."/>
            <person name="Bemis G."/>
            <person name="Bentley D."/>
            <person name="Bradshaw H."/>
            <person name="Bourne S."/>
            <person name="Cordes M."/>
            <person name="Du Z."/>
            <person name="Fulton L."/>
            <person name="Goela D."/>
            <person name="Graves T."/>
            <person name="Hawkins J."/>
            <person name="Hinds K."/>
            <person name="Kemp K."/>
            <person name="Latreille P."/>
            <person name="Layman D."/>
            <person name="Ozersky P."/>
            <person name="Rohlfing T."/>
            <person name="Scheet P."/>
            <person name="Walker C."/>
            <person name="Wamsley A."/>
            <person name="Wohldmann P."/>
            <person name="Pepin K."/>
            <person name="Nelson J."/>
            <person name="Korf I."/>
            <person name="Bedell J.A."/>
            <person name="Hillier L.W."/>
            <person name="Mardis E."/>
            <person name="Waterston R."/>
            <person name="Wilson R."/>
            <person name="Emanuel B.S."/>
            <person name="Shaikh T."/>
            <person name="Kurahashi H."/>
            <person name="Saitta S."/>
            <person name="Budarf M.L."/>
            <person name="McDermid H.E."/>
            <person name="Johnson A."/>
            <person name="Wong A.C.C."/>
            <person name="Morrow B.E."/>
            <person name="Edelmann L."/>
            <person name="Kim U.J."/>
            <person name="Shizuya H."/>
            <person name="Simon M.I."/>
            <person name="Dumanski J.P."/>
            <person name="Peyrard M."/>
            <person name="Kedra D."/>
            <person name="Seroussi E."/>
            <person name="Fransson I."/>
            <person name="Tapia I."/>
            <person name="Bruder C.E."/>
            <person name="O'Brien K.P."/>
            <person name="Wilkinson P."/>
            <person name="Bodenteich A."/>
            <person name="Hartman K."/>
            <person name="Hu X."/>
            <person name="Khan A.S."/>
            <person name="Lane L."/>
            <person name="Tilahun Y."/>
            <person name="Wright H."/>
        </authorList>
    </citation>
    <scope>NUCLEOTIDE SEQUENCE [LARGE SCALE GENOMIC DNA]</scope>
</reference>
<reference key="3">
    <citation type="journal article" date="2004" name="Genome Res.">
        <title>The status, quality, and expansion of the NIH full-length cDNA project: the Mammalian Gene Collection (MGC).</title>
        <authorList>
            <consortium name="The MGC Project Team"/>
        </authorList>
    </citation>
    <scope>NUCLEOTIDE SEQUENCE [LARGE SCALE MRNA]</scope>
    <scope>VARIANTS GLN-105 AND ASP-113</scope>
</reference>
<reference key="4">
    <citation type="journal article" date="1997" name="J. Biol. Chem.">
        <title>Sequence analysis of betaA3, betaB3, and betaA4 crystallins completes the identification of the major proteins in young human lens.</title>
        <authorList>
            <person name="Lampi K.J."/>
            <person name="Ma Z."/>
            <person name="Shih M."/>
            <person name="Shearer T.R."/>
            <person name="Smith J.B."/>
            <person name="Smith D.L."/>
            <person name="David L.L."/>
        </authorList>
    </citation>
    <scope>NUCLEOTIDE SEQUENCE [MRNA] OF 1-103</scope>
    <scope>ACETYLATION AT MET-1</scope>
    <scope>MASS SPECTROMETRY</scope>
</reference>
<reference key="5">
    <citation type="journal article" date="1989" name="J. Mol. Evol.">
        <title>Different evolution rates within the lens-specific beta-crystallin gene family.</title>
        <authorList>
            <person name="Aarts H.J.M."/>
            <person name="Jacobs E.H.M."/>
            <person name="van Willigen G."/>
            <person name="Lubsen N.H."/>
            <person name="Schoenmakers J.G.G."/>
        </authorList>
    </citation>
    <scope>NUCLEOTIDE SEQUENCE [GENOMIC DNA] OF 66-211</scope>
    <scope>VARIANT ASP-113</scope>
    <source>
        <tissue>Lens</tissue>
    </source>
</reference>
<reference key="6">
    <citation type="journal article" date="2005" name="Invest. Ophthalmol. Vis. Sci.">
        <title>Mutations in betaB3-crystallin associated with autosomal recessive cataract in two Pakistani families.</title>
        <authorList>
            <person name="Riazuddin S.A."/>
            <person name="Yasmeen A."/>
            <person name="Yao W."/>
            <person name="Sergeev Y.V."/>
            <person name="Zhang Q."/>
            <person name="Zulfiqar F."/>
            <person name="Riaz A."/>
            <person name="Riazuddin S."/>
            <person name="Hejtmancik J.F."/>
        </authorList>
    </citation>
    <scope>VARIANT CTRCT22 ARG-165</scope>
</reference>
<reference key="7">
    <citation type="journal article" date="2009" name="Invest. Ophthalmol. Vis. Sci.">
        <title>Comprehensive mutational screening in a cohort of Danish families with hereditary congenital cataract.</title>
        <authorList>
            <person name="Hansen L."/>
            <person name="Mikkelsen A."/>
            <person name="Nuernberg P."/>
            <person name="Nuernberg G."/>
            <person name="Anjum I."/>
            <person name="Eiberg H."/>
            <person name="Rosenberg T."/>
        </authorList>
    </citation>
    <scope>VARIANT CTRCT22 HIS-75</scope>
</reference>
<reference key="8">
    <citation type="journal article" date="2013" name="Hum. Genet.">
        <title>Whole exome sequencing in dominant cataract identifies a new causative factor, CRYBA2, and a variety of novel alleles in known genes.</title>
        <authorList>
            <person name="Reis L.M."/>
            <person name="Tyler R.C."/>
            <person name="Muheisen S."/>
            <person name="Raggio V."/>
            <person name="Salviati L."/>
            <person name="Han D.P."/>
            <person name="Costakos D."/>
            <person name="Yonath H."/>
            <person name="Hall S."/>
            <person name="Power P."/>
            <person name="Semina E.V."/>
        </authorList>
    </citation>
    <scope>VARIANT CTRCT22 GLU-194</scope>
</reference>
<evidence type="ECO:0000250" key="1"/>
<evidence type="ECO:0000250" key="2">
    <source>
        <dbReference type="UniProtKB" id="P02524"/>
    </source>
</evidence>
<evidence type="ECO:0000255" key="3">
    <source>
        <dbReference type="PROSITE-ProRule" id="PRU00028"/>
    </source>
</evidence>
<evidence type="ECO:0000269" key="4">
    <source>
    </source>
</evidence>
<evidence type="ECO:0000269" key="5">
    <source>
    </source>
</evidence>
<evidence type="ECO:0000269" key="6">
    <source>
    </source>
</evidence>
<evidence type="ECO:0000269" key="7">
    <source>
    </source>
</evidence>
<evidence type="ECO:0000269" key="8">
    <source>
    </source>
</evidence>
<evidence type="ECO:0000269" key="9">
    <source>
    </source>
</evidence>
<evidence type="ECO:0000269" key="10">
    <source>
    </source>
</evidence>
<evidence type="ECO:0000305" key="11"/>
<evidence type="ECO:0007829" key="12">
    <source>
        <dbReference type="PDB" id="3QK3"/>
    </source>
</evidence>
<dbReference type="EMBL" id="CR456427">
    <property type="protein sequence ID" value="CAG30313.1"/>
    <property type="molecule type" value="mRNA"/>
</dbReference>
<dbReference type="EMBL" id="Z99916">
    <property type="status" value="NOT_ANNOTATED_CDS"/>
    <property type="molecule type" value="Genomic_DNA"/>
</dbReference>
<dbReference type="EMBL" id="BC069479">
    <property type="protein sequence ID" value="AAH69479.2"/>
    <property type="molecule type" value="mRNA"/>
</dbReference>
<dbReference type="EMBL" id="BC102021">
    <property type="protein sequence ID" value="AAI02022.1"/>
    <property type="molecule type" value="mRNA"/>
</dbReference>
<dbReference type="EMBL" id="BC102022">
    <property type="protein sequence ID" value="AAI02023.1"/>
    <property type="molecule type" value="mRNA"/>
</dbReference>
<dbReference type="EMBL" id="BC107482">
    <property type="protein sequence ID" value="AAI07483.1"/>
    <property type="molecule type" value="mRNA"/>
</dbReference>
<dbReference type="EMBL" id="U71216">
    <property type="protein sequence ID" value="AAC50972.1"/>
    <property type="molecule type" value="mRNA"/>
</dbReference>
<dbReference type="EMBL" id="X15144">
    <property type="protein sequence ID" value="CAA33242.2"/>
    <property type="molecule type" value="Genomic_DNA"/>
</dbReference>
<dbReference type="EMBL" id="X15145">
    <property type="protein sequence ID" value="CAA33242.2"/>
    <property type="status" value="JOINED"/>
    <property type="molecule type" value="Genomic_DNA"/>
</dbReference>
<dbReference type="EMBL" id="X15146">
    <property type="protein sequence ID" value="CAA33242.2"/>
    <property type="status" value="JOINED"/>
    <property type="molecule type" value="Genomic_DNA"/>
</dbReference>
<dbReference type="CCDS" id="CCDS13830.1"/>
<dbReference type="PIR" id="S10089">
    <property type="entry name" value="S10089"/>
</dbReference>
<dbReference type="RefSeq" id="NP_004067.1">
    <property type="nucleotide sequence ID" value="NM_004076.5"/>
</dbReference>
<dbReference type="RefSeq" id="XP_047297103.1">
    <property type="nucleotide sequence ID" value="XM_047441147.1"/>
</dbReference>
<dbReference type="PDB" id="3QK3">
    <property type="method" value="X-ray"/>
    <property type="resolution" value="1.95 A"/>
    <property type="chains" value="A/B/C=21-199"/>
</dbReference>
<dbReference type="PDBsum" id="3QK3"/>
<dbReference type="SMR" id="P26998"/>
<dbReference type="BioGRID" id="107807">
    <property type="interactions" value="83"/>
</dbReference>
<dbReference type="FunCoup" id="P26998">
    <property type="interactions" value="15"/>
</dbReference>
<dbReference type="IntAct" id="P26998">
    <property type="interactions" value="67"/>
</dbReference>
<dbReference type="MINT" id="P26998"/>
<dbReference type="STRING" id="9606.ENSP00000215855"/>
<dbReference type="iPTMnet" id="P26998"/>
<dbReference type="PhosphoSitePlus" id="P26998"/>
<dbReference type="BioMuta" id="CRYBB3"/>
<dbReference type="DMDM" id="311033476"/>
<dbReference type="MassIVE" id="P26998"/>
<dbReference type="PaxDb" id="9606-ENSP00000215855"/>
<dbReference type="PeptideAtlas" id="P26998"/>
<dbReference type="PRIDE" id="P26998"/>
<dbReference type="ProteomicsDB" id="54372"/>
<dbReference type="Antibodypedia" id="24112">
    <property type="antibodies" value="121 antibodies from 21 providers"/>
</dbReference>
<dbReference type="DNASU" id="1417"/>
<dbReference type="Ensembl" id="ENST00000215855.7">
    <property type="protein sequence ID" value="ENSP00000215855.2"/>
    <property type="gene ID" value="ENSG00000100053.10"/>
</dbReference>
<dbReference type="GeneID" id="1417"/>
<dbReference type="KEGG" id="hsa:1417"/>
<dbReference type="MANE-Select" id="ENST00000215855.7">
    <property type="protein sequence ID" value="ENSP00000215855.2"/>
    <property type="RefSeq nucleotide sequence ID" value="NM_004076.5"/>
    <property type="RefSeq protein sequence ID" value="NP_004067.1"/>
</dbReference>
<dbReference type="UCSC" id="uc003abo.3">
    <property type="organism name" value="human"/>
</dbReference>
<dbReference type="AGR" id="HGNC:2400"/>
<dbReference type="CTD" id="1417"/>
<dbReference type="DisGeNET" id="1417"/>
<dbReference type="GeneCards" id="CRYBB3"/>
<dbReference type="HGNC" id="HGNC:2400">
    <property type="gene designation" value="CRYBB3"/>
</dbReference>
<dbReference type="HPA" id="ENSG00000100053">
    <property type="expression patterns" value="Low tissue specificity"/>
</dbReference>
<dbReference type="MalaCards" id="CRYBB3"/>
<dbReference type="MIM" id="123630">
    <property type="type" value="gene"/>
</dbReference>
<dbReference type="MIM" id="609741">
    <property type="type" value="phenotype"/>
</dbReference>
<dbReference type="neXtProt" id="NX_P26998"/>
<dbReference type="OpenTargets" id="ENSG00000100053"/>
<dbReference type="Orphanet" id="98988">
    <property type="disease" value="Early-onset anterior polar cataract"/>
</dbReference>
<dbReference type="Orphanet" id="98991">
    <property type="disease" value="Early-onset nuclear cataract"/>
</dbReference>
<dbReference type="PharmGKB" id="PA26914"/>
<dbReference type="VEuPathDB" id="HostDB:ENSG00000100053"/>
<dbReference type="eggNOG" id="ENOG502QTNZ">
    <property type="taxonomic scope" value="Eukaryota"/>
</dbReference>
<dbReference type="GeneTree" id="ENSGT00940000158425"/>
<dbReference type="HOGENOM" id="CLU_081883_0_1_1"/>
<dbReference type="InParanoid" id="P26998"/>
<dbReference type="OMA" id="RIRDRKW"/>
<dbReference type="OrthoDB" id="8701124at2759"/>
<dbReference type="PAN-GO" id="P26998">
    <property type="GO annotations" value="3 GO annotations based on evolutionary models"/>
</dbReference>
<dbReference type="PhylomeDB" id="P26998"/>
<dbReference type="TreeFam" id="TF331401"/>
<dbReference type="PathwayCommons" id="P26998"/>
<dbReference type="SignaLink" id="P26998"/>
<dbReference type="SIGNOR" id="P26998"/>
<dbReference type="BioGRID-ORCS" id="1417">
    <property type="hits" value="18 hits in 1147 CRISPR screens"/>
</dbReference>
<dbReference type="EvolutionaryTrace" id="P26998"/>
<dbReference type="GeneWiki" id="CRYBB3"/>
<dbReference type="GenomeRNAi" id="1417"/>
<dbReference type="Pharos" id="P26998">
    <property type="development level" value="Tbio"/>
</dbReference>
<dbReference type="PRO" id="PR:P26998"/>
<dbReference type="Proteomes" id="UP000005640">
    <property type="component" value="Chromosome 22"/>
</dbReference>
<dbReference type="RNAct" id="P26998">
    <property type="molecule type" value="protein"/>
</dbReference>
<dbReference type="Bgee" id="ENSG00000100053">
    <property type="expression patterns" value="Expressed in male germ line stem cell (sensu Vertebrata) in testis and 104 other cell types or tissues"/>
</dbReference>
<dbReference type="ExpressionAtlas" id="P26998">
    <property type="expression patterns" value="baseline and differential"/>
</dbReference>
<dbReference type="GO" id="GO:0005212">
    <property type="term" value="F:structural constituent of eye lens"/>
    <property type="evidence" value="ECO:0000318"/>
    <property type="project" value="GO_Central"/>
</dbReference>
<dbReference type="GO" id="GO:0002088">
    <property type="term" value="P:lens development in camera-type eye"/>
    <property type="evidence" value="ECO:0000318"/>
    <property type="project" value="GO_Central"/>
</dbReference>
<dbReference type="GO" id="GO:0007601">
    <property type="term" value="P:visual perception"/>
    <property type="evidence" value="ECO:0000318"/>
    <property type="project" value="GO_Central"/>
</dbReference>
<dbReference type="FunFam" id="2.60.20.10:FF:000005">
    <property type="entry name" value="Crystallin, beta B1"/>
    <property type="match status" value="1"/>
</dbReference>
<dbReference type="FunFam" id="2.60.20.10:FF:000002">
    <property type="entry name" value="Crystallin, beta B2"/>
    <property type="match status" value="1"/>
</dbReference>
<dbReference type="Gene3D" id="2.60.20.10">
    <property type="entry name" value="Crystallins"/>
    <property type="match status" value="2"/>
</dbReference>
<dbReference type="InterPro" id="IPR050252">
    <property type="entry name" value="Beta/Gamma-Crystallin"/>
</dbReference>
<dbReference type="InterPro" id="IPR001064">
    <property type="entry name" value="Beta/gamma_crystallin"/>
</dbReference>
<dbReference type="InterPro" id="IPR011024">
    <property type="entry name" value="G_crystallin-like"/>
</dbReference>
<dbReference type="PANTHER" id="PTHR11818:SF13">
    <property type="entry name" value="BETA-CRYSTALLIN B3"/>
    <property type="match status" value="1"/>
</dbReference>
<dbReference type="PANTHER" id="PTHR11818">
    <property type="entry name" value="BETA/GAMMA CRYSTALLIN"/>
    <property type="match status" value="1"/>
</dbReference>
<dbReference type="Pfam" id="PF00030">
    <property type="entry name" value="Crystall"/>
    <property type="match status" value="2"/>
</dbReference>
<dbReference type="PRINTS" id="PR01367">
    <property type="entry name" value="BGCRYSTALLIN"/>
</dbReference>
<dbReference type="SMART" id="SM00247">
    <property type="entry name" value="XTALbg"/>
    <property type="match status" value="2"/>
</dbReference>
<dbReference type="SUPFAM" id="SSF49695">
    <property type="entry name" value="gamma-Crystallin-like"/>
    <property type="match status" value="1"/>
</dbReference>
<dbReference type="PROSITE" id="PS50915">
    <property type="entry name" value="CRYSTALLIN_BETA_GAMMA"/>
    <property type="match status" value="4"/>
</dbReference>
<feature type="chain" id="PRO_0000057560" description="Beta-crystallin B3">
    <location>
        <begin position="1"/>
        <end position="211"/>
    </location>
</feature>
<feature type="initiator methionine" description="Removed; alternate" evidence="2">
    <location>
        <position position="1"/>
    </location>
</feature>
<feature type="chain" id="PRO_0000421774" description="Beta-crystallin B3, N-terminally processed">
    <location>
        <begin position="2"/>
        <end position="211"/>
    </location>
</feature>
<feature type="domain" description="Beta/gamma crystallin 'Greek key' 1" evidence="3">
    <location>
        <begin position="24"/>
        <end position="63"/>
    </location>
</feature>
<feature type="domain" description="Beta/gamma crystallin 'Greek key' 2" evidence="3">
    <location>
        <begin position="64"/>
        <end position="108"/>
    </location>
</feature>
<feature type="domain" description="Beta/gamma crystallin 'Greek key' 3" evidence="3">
    <location>
        <begin position="114"/>
        <end position="155"/>
    </location>
</feature>
<feature type="domain" description="Beta/gamma crystallin 'Greek key' 4" evidence="3">
    <location>
        <begin position="156"/>
        <end position="198"/>
    </location>
</feature>
<feature type="region of interest" description="N-terminal arm">
    <location>
        <begin position="2"/>
        <end position="23"/>
    </location>
</feature>
<feature type="region of interest" description="Connecting peptide">
    <location>
        <begin position="109"/>
        <end position="113"/>
    </location>
</feature>
<feature type="region of interest" description="C-terminal arm">
    <location>
        <begin position="200"/>
        <end position="211"/>
    </location>
</feature>
<feature type="modified residue" description="N-acetylmethionine" evidence="10">
    <location>
        <position position="1"/>
    </location>
</feature>
<feature type="modified residue" description="N-acetylalanine; in Beta-crystallin B3, N-terminally processed" evidence="2">
    <location>
        <position position="2"/>
    </location>
</feature>
<feature type="sequence variant" id="VAR_084792" description="In CTRCT22; uncertain significance; dbSNP:rs183587921." evidence="7">
    <original>R</original>
    <variation>H</variation>
    <location>
        <position position="75"/>
    </location>
</feature>
<feature type="sequence variant" id="VAR_025277" description="In dbSNP:rs17670506." evidence="5">
    <original>R</original>
    <variation>Q</variation>
    <location>
        <position position="105"/>
    </location>
</feature>
<feature type="sequence variant" id="VAR_025278" description="In dbSNP:rs9608378." evidence="4 5 9">
    <original>H</original>
    <variation>D</variation>
    <location>
        <position position="113"/>
    </location>
</feature>
<feature type="sequence variant" id="VAR_025279" description="In dbSNP:rs4455261.">
    <original>V</original>
    <variation>I</variation>
    <location>
        <position position="159"/>
    </location>
</feature>
<feature type="sequence variant" id="VAR_025280" description="In CTRCT22; dbSNP:rs74315490." evidence="6">
    <original>G</original>
    <variation>R</variation>
    <location>
        <position position="165"/>
    </location>
</feature>
<feature type="sequence variant" id="VAR_070031" description="In CTRCT22; dbSNP:rs587777601." evidence="8">
    <original>V</original>
    <variation>E</variation>
    <location>
        <position position="194"/>
    </location>
</feature>
<feature type="sequence conflict" description="In Ref. 5; CAA33242." evidence="11" ref="5">
    <original>E</original>
    <variation>D</variation>
    <location>
        <position position="130"/>
    </location>
</feature>
<feature type="sequence conflict" description="In Ref. 5; CAA33242." evidence="11" ref="5">
    <original>F</original>
    <variation>L</variation>
    <location>
        <position position="173"/>
    </location>
</feature>
<feature type="strand" evidence="12">
    <location>
        <begin position="25"/>
        <end position="31"/>
    </location>
</feature>
<feature type="helix" evidence="12">
    <location>
        <begin position="32"/>
        <end position="34"/>
    </location>
</feature>
<feature type="strand" evidence="12">
    <location>
        <begin position="38"/>
        <end position="43"/>
    </location>
</feature>
<feature type="strand" evidence="12">
    <location>
        <begin position="58"/>
        <end position="63"/>
    </location>
</feature>
<feature type="strand" evidence="12">
    <location>
        <begin position="66"/>
        <end position="71"/>
    </location>
</feature>
<feature type="helix" evidence="12">
    <location>
        <begin position="72"/>
        <end position="74"/>
    </location>
</feature>
<feature type="strand" evidence="12">
    <location>
        <begin position="76"/>
        <end position="81"/>
    </location>
</feature>
<feature type="strand" evidence="12">
    <location>
        <begin position="83"/>
        <end position="86"/>
    </location>
</feature>
<feature type="helix" evidence="12">
    <location>
        <begin position="89"/>
        <end position="92"/>
    </location>
</feature>
<feature type="strand" evidence="12">
    <location>
        <begin position="94"/>
        <end position="97"/>
    </location>
</feature>
<feature type="strand" evidence="12">
    <location>
        <begin position="103"/>
        <end position="106"/>
    </location>
</feature>
<feature type="strand" evidence="12">
    <location>
        <begin position="115"/>
        <end position="121"/>
    </location>
</feature>
<feature type="turn" evidence="12">
    <location>
        <begin position="122"/>
        <end position="124"/>
    </location>
</feature>
<feature type="strand" evidence="12">
    <location>
        <begin position="125"/>
        <end position="133"/>
    </location>
</feature>
<feature type="helix" evidence="12">
    <location>
        <begin position="139"/>
        <end position="142"/>
    </location>
</feature>
<feature type="strand" evidence="12">
    <location>
        <begin position="150"/>
        <end position="156"/>
    </location>
</feature>
<feature type="strand" evidence="12">
    <location>
        <begin position="158"/>
        <end position="163"/>
    </location>
</feature>
<feature type="turn" evidence="12">
    <location>
        <begin position="164"/>
        <end position="166"/>
    </location>
</feature>
<feature type="strand" evidence="12">
    <location>
        <begin position="167"/>
        <end position="173"/>
    </location>
</feature>
<feature type="strand" evidence="12">
    <location>
        <begin position="175"/>
        <end position="180"/>
    </location>
</feature>
<feature type="helix" evidence="12">
    <location>
        <begin position="181"/>
        <end position="184"/>
    </location>
</feature>
<feature type="strand" evidence="12">
    <location>
        <begin position="193"/>
        <end position="196"/>
    </location>
</feature>